<reference key="1">
    <citation type="journal article" date="2005" name="Nucleic Acids Res.">
        <title>Genome dynamics and diversity of Shigella species, the etiologic agents of bacillary dysentery.</title>
        <authorList>
            <person name="Yang F."/>
            <person name="Yang J."/>
            <person name="Zhang X."/>
            <person name="Chen L."/>
            <person name="Jiang Y."/>
            <person name="Yan Y."/>
            <person name="Tang X."/>
            <person name="Wang J."/>
            <person name="Xiong Z."/>
            <person name="Dong J."/>
            <person name="Xue Y."/>
            <person name="Zhu Y."/>
            <person name="Xu X."/>
            <person name="Sun L."/>
            <person name="Chen S."/>
            <person name="Nie H."/>
            <person name="Peng J."/>
            <person name="Xu J."/>
            <person name="Wang Y."/>
            <person name="Yuan Z."/>
            <person name="Wen Y."/>
            <person name="Yao Z."/>
            <person name="Shen Y."/>
            <person name="Qiang B."/>
            <person name="Hou Y."/>
            <person name="Yu J."/>
            <person name="Jin Q."/>
        </authorList>
    </citation>
    <scope>NUCLEOTIDE SEQUENCE [LARGE SCALE GENOMIC DNA]</scope>
    <source>
        <strain>Ss046</strain>
    </source>
</reference>
<name>GPPA_SHISS</name>
<evidence type="ECO:0000255" key="1">
    <source>
        <dbReference type="HAMAP-Rule" id="MF_01550"/>
    </source>
</evidence>
<comment type="function">
    <text evidence="1">Catalyzes the conversion of pppGpp to ppGpp. Guanosine pentaphosphate (pppGpp) is a cytoplasmic signaling molecule which together with ppGpp controls the 'stringent response', an adaptive process that allows bacteria to respond to amino acid starvation, resulting in the coordinated regulation of numerous cellular activities.</text>
</comment>
<comment type="catalytic activity">
    <reaction evidence="1">
        <text>guanosine 3'-diphosphate 5'-triphosphate + H2O = guanosine 3',5'-bis(diphosphate) + phosphate + H(+)</text>
        <dbReference type="Rhea" id="RHEA:13073"/>
        <dbReference type="ChEBI" id="CHEBI:15377"/>
        <dbReference type="ChEBI" id="CHEBI:15378"/>
        <dbReference type="ChEBI" id="CHEBI:43474"/>
        <dbReference type="ChEBI" id="CHEBI:77828"/>
        <dbReference type="ChEBI" id="CHEBI:142410"/>
        <dbReference type="EC" id="3.6.1.40"/>
    </reaction>
</comment>
<comment type="pathway">
    <text evidence="1">Purine metabolism; ppGpp biosynthesis; ppGpp from GTP: step 2/2.</text>
</comment>
<comment type="similarity">
    <text evidence="1">Belongs to the GppA/Ppx family. GppA subfamily.</text>
</comment>
<dbReference type="EC" id="3.6.1.40" evidence="1"/>
<dbReference type="EMBL" id="CP000038">
    <property type="protein sequence ID" value="AAZ90477.1"/>
    <property type="molecule type" value="Genomic_DNA"/>
</dbReference>
<dbReference type="RefSeq" id="WP_005137437.1">
    <property type="nucleotide sequence ID" value="NC_007384.1"/>
</dbReference>
<dbReference type="SMR" id="Q3YVI5"/>
<dbReference type="GeneID" id="93778165"/>
<dbReference type="KEGG" id="ssn:SSON_3950"/>
<dbReference type="HOGENOM" id="CLU_025908_4_0_6"/>
<dbReference type="UniPathway" id="UPA00908">
    <property type="reaction ID" value="UER00885"/>
</dbReference>
<dbReference type="Proteomes" id="UP000002529">
    <property type="component" value="Chromosome"/>
</dbReference>
<dbReference type="GO" id="GO:0008894">
    <property type="term" value="F:guanosine-5'-triphosphate,3'-diphosphate diphosphatase activity"/>
    <property type="evidence" value="ECO:0007669"/>
    <property type="project" value="UniProtKB-UniRule"/>
</dbReference>
<dbReference type="GO" id="GO:0015974">
    <property type="term" value="P:guanosine pentaphosphate catabolic process"/>
    <property type="evidence" value="ECO:0007669"/>
    <property type="project" value="InterPro"/>
</dbReference>
<dbReference type="GO" id="GO:0015970">
    <property type="term" value="P:guanosine tetraphosphate biosynthetic process"/>
    <property type="evidence" value="ECO:0007669"/>
    <property type="project" value="UniProtKB-UniRule"/>
</dbReference>
<dbReference type="GO" id="GO:0015949">
    <property type="term" value="P:nucleobase-containing small molecule interconversion"/>
    <property type="evidence" value="ECO:0007669"/>
    <property type="project" value="TreeGrafter"/>
</dbReference>
<dbReference type="CDD" id="cd24117">
    <property type="entry name" value="ASKHA_NBD_EcGppA-like"/>
    <property type="match status" value="1"/>
</dbReference>
<dbReference type="FunFam" id="1.10.3210.10:FF:000004">
    <property type="entry name" value="Guanosine-5'-triphosphate,3'-diphosphate pyrophosphatase"/>
    <property type="match status" value="1"/>
</dbReference>
<dbReference type="FunFam" id="3.30.420.150:FF:000001">
    <property type="entry name" value="Guanosine-5'-triphosphate,3'-diphosphate pyrophosphatase"/>
    <property type="match status" value="1"/>
</dbReference>
<dbReference type="FunFam" id="3.30.420.40:FF:000023">
    <property type="entry name" value="Guanosine-5'-triphosphate,3'-diphosphate pyrophosphatase"/>
    <property type="match status" value="1"/>
</dbReference>
<dbReference type="Gene3D" id="3.30.420.40">
    <property type="match status" value="1"/>
</dbReference>
<dbReference type="Gene3D" id="3.30.420.150">
    <property type="entry name" value="Exopolyphosphatase. Domain 2"/>
    <property type="match status" value="1"/>
</dbReference>
<dbReference type="Gene3D" id="1.10.3210.10">
    <property type="entry name" value="Hypothetical protein af1432"/>
    <property type="match status" value="1"/>
</dbReference>
<dbReference type="HAMAP" id="MF_01550">
    <property type="entry name" value="GppA"/>
    <property type="match status" value="1"/>
</dbReference>
<dbReference type="InterPro" id="IPR043129">
    <property type="entry name" value="ATPase_NBD"/>
</dbReference>
<dbReference type="InterPro" id="IPR050273">
    <property type="entry name" value="GppA/Ppx_hydrolase"/>
</dbReference>
<dbReference type="InterPro" id="IPR023709">
    <property type="entry name" value="Guo-5TP_3DP_PyrP"/>
</dbReference>
<dbReference type="InterPro" id="IPR048950">
    <property type="entry name" value="Ppx_GppA_C"/>
</dbReference>
<dbReference type="InterPro" id="IPR003695">
    <property type="entry name" value="Ppx_GppA_N"/>
</dbReference>
<dbReference type="InterPro" id="IPR030673">
    <property type="entry name" value="PyroPPase_GppA_Ppx"/>
</dbReference>
<dbReference type="NCBIfam" id="NF008260">
    <property type="entry name" value="PRK11031.1"/>
    <property type="match status" value="1"/>
</dbReference>
<dbReference type="PANTHER" id="PTHR30005">
    <property type="entry name" value="EXOPOLYPHOSPHATASE"/>
    <property type="match status" value="1"/>
</dbReference>
<dbReference type="PANTHER" id="PTHR30005:SF0">
    <property type="entry name" value="RETROGRADE REGULATION PROTEIN 2"/>
    <property type="match status" value="1"/>
</dbReference>
<dbReference type="Pfam" id="PF02541">
    <property type="entry name" value="Ppx-GppA"/>
    <property type="match status" value="1"/>
</dbReference>
<dbReference type="Pfam" id="PF21447">
    <property type="entry name" value="Ppx-GppA_III"/>
    <property type="match status" value="1"/>
</dbReference>
<dbReference type="PIRSF" id="PIRSF001267">
    <property type="entry name" value="Pyrophosphatase_GppA_Ppx"/>
    <property type="match status" value="1"/>
</dbReference>
<dbReference type="SUPFAM" id="SSF53067">
    <property type="entry name" value="Actin-like ATPase domain"/>
    <property type="match status" value="2"/>
</dbReference>
<dbReference type="SUPFAM" id="SSF109604">
    <property type="entry name" value="HD-domain/PDEase-like"/>
    <property type="match status" value="1"/>
</dbReference>
<feature type="chain" id="PRO_0000194291" description="Guanosine-5'-triphosphate,3'-diphosphate pyrophosphatase">
    <location>
        <begin position="1"/>
        <end position="494"/>
    </location>
</feature>
<sequence>MGSTSSLYAAIDLGSNSFHMLVVREVAGSIQTLTRIKRKVRLAAGLNSENALSNEAMERGWQCLRLFAERLQDIPPSQIRVVATATLRLAVNAGDFIANAQEILGCPVQVISGEEEARLIYQGVAHTTGGADQRLVVDIGGASTELVTGTGAQTTSLFSLSMGCVTWLERYFADRNLGQENFDAAEKAAREVLRPVADELRYHGWKVCVGASGTVQALQEIMMAQGMDERITLEKLQQLKQRAIHCGRLEELEIDGLTLERALVFPSGLAILIAIFTELNIQCMTLAGGALREGLVYGMLHLAVEQDIRSRTLRNIQRRFMIDIDQAQRVAKVAANFFDQVEKEWHLEAISRDLLISACQLHEIGLSVDFKQAPQHAAYLVRNLDLPGFTPAQKKLLATLLLNQTNPVDLSSLHQQNAVPPRVAEQLCRLLRLAIIFASRRRDDLVPEMTLQANHELLTLTLPQGWLTQHPLGKEIIAQESQWQSYVHWPLEVH</sequence>
<proteinExistence type="inferred from homology"/>
<keyword id="KW-0378">Hydrolase</keyword>
<keyword id="KW-1185">Reference proteome</keyword>
<organism>
    <name type="scientific">Shigella sonnei (strain Ss046)</name>
    <dbReference type="NCBI Taxonomy" id="300269"/>
    <lineage>
        <taxon>Bacteria</taxon>
        <taxon>Pseudomonadati</taxon>
        <taxon>Pseudomonadota</taxon>
        <taxon>Gammaproteobacteria</taxon>
        <taxon>Enterobacterales</taxon>
        <taxon>Enterobacteriaceae</taxon>
        <taxon>Shigella</taxon>
    </lineage>
</organism>
<accession>Q3YVI5</accession>
<gene>
    <name evidence="1" type="primary">gppA</name>
    <name type="ordered locus">SSON_3950</name>
</gene>
<protein>
    <recommendedName>
        <fullName evidence="1">Guanosine-5'-triphosphate,3'-diphosphate pyrophosphatase</fullName>
        <ecNumber evidence="1">3.6.1.40</ecNumber>
    </recommendedName>
    <alternativeName>
        <fullName evidence="1">Guanosine pentaphosphate phosphohydrolase</fullName>
    </alternativeName>
    <alternativeName>
        <fullName evidence="1">pppGpp-5'-phosphohydrolase</fullName>
    </alternativeName>
</protein>